<accession>Q2FI05</accession>
<protein>
    <recommendedName>
        <fullName evidence="1">Bifunctional purine biosynthesis protein PurH</fullName>
    </recommendedName>
    <domain>
        <recommendedName>
            <fullName evidence="1">Phosphoribosylaminoimidazolecarboxamide formyltransferase</fullName>
            <ecNumber evidence="1">2.1.2.3</ecNumber>
        </recommendedName>
        <alternativeName>
            <fullName evidence="1">AICAR transformylase</fullName>
        </alternativeName>
    </domain>
    <domain>
        <recommendedName>
            <fullName evidence="1">IMP cyclohydrolase</fullName>
            <ecNumber evidence="1">3.5.4.10</ecNumber>
        </recommendedName>
        <alternativeName>
            <fullName evidence="1">ATIC</fullName>
        </alternativeName>
        <alternativeName>
            <fullName evidence="1">IMP synthase</fullName>
        </alternativeName>
        <alternativeName>
            <fullName evidence="1">Inosinicase</fullName>
        </alternativeName>
    </domain>
</protein>
<comment type="catalytic activity">
    <reaction evidence="1">
        <text>(6R)-10-formyltetrahydrofolate + 5-amino-1-(5-phospho-beta-D-ribosyl)imidazole-4-carboxamide = 5-formamido-1-(5-phospho-D-ribosyl)imidazole-4-carboxamide + (6S)-5,6,7,8-tetrahydrofolate</text>
        <dbReference type="Rhea" id="RHEA:22192"/>
        <dbReference type="ChEBI" id="CHEBI:57453"/>
        <dbReference type="ChEBI" id="CHEBI:58467"/>
        <dbReference type="ChEBI" id="CHEBI:58475"/>
        <dbReference type="ChEBI" id="CHEBI:195366"/>
        <dbReference type="EC" id="2.1.2.3"/>
    </reaction>
</comment>
<comment type="catalytic activity">
    <reaction evidence="1">
        <text>IMP + H2O = 5-formamido-1-(5-phospho-D-ribosyl)imidazole-4-carboxamide</text>
        <dbReference type="Rhea" id="RHEA:18445"/>
        <dbReference type="ChEBI" id="CHEBI:15377"/>
        <dbReference type="ChEBI" id="CHEBI:58053"/>
        <dbReference type="ChEBI" id="CHEBI:58467"/>
        <dbReference type="EC" id="3.5.4.10"/>
    </reaction>
</comment>
<comment type="pathway">
    <text evidence="1">Purine metabolism; IMP biosynthesis via de novo pathway; 5-formamido-1-(5-phospho-D-ribosyl)imidazole-4-carboxamide from 5-amino-1-(5-phospho-D-ribosyl)imidazole-4-carboxamide (10-formyl THF route): step 1/1.</text>
</comment>
<comment type="pathway">
    <text evidence="1">Purine metabolism; IMP biosynthesis via de novo pathway; IMP from 5-formamido-1-(5-phospho-D-ribosyl)imidazole-4-carboxamide: step 1/1.</text>
</comment>
<comment type="domain">
    <text evidence="1">The IMP cyclohydrolase activity resides in the N-terminal region.</text>
</comment>
<comment type="similarity">
    <text evidence="1">Belongs to the PurH family.</text>
</comment>
<feature type="chain" id="PRO_1000018961" description="Bifunctional purine biosynthesis protein PurH">
    <location>
        <begin position="1"/>
        <end position="492"/>
    </location>
</feature>
<feature type="domain" description="MGS-like" evidence="2">
    <location>
        <begin position="1"/>
        <end position="144"/>
    </location>
</feature>
<gene>
    <name evidence="1" type="primary">purH</name>
    <name type="ordered locus">SAUSA300_0975</name>
</gene>
<dbReference type="EC" id="2.1.2.3" evidence="1"/>
<dbReference type="EC" id="3.5.4.10" evidence="1"/>
<dbReference type="EMBL" id="CP000255">
    <property type="protein sequence ID" value="ABD21857.1"/>
    <property type="molecule type" value="Genomic_DNA"/>
</dbReference>
<dbReference type="RefSeq" id="WP_000709291.1">
    <property type="nucleotide sequence ID" value="NZ_CP027476.1"/>
</dbReference>
<dbReference type="SMR" id="Q2FI05"/>
<dbReference type="KEGG" id="saa:SAUSA300_0975"/>
<dbReference type="HOGENOM" id="CLU_016316_5_2_9"/>
<dbReference type="UniPathway" id="UPA00074">
    <property type="reaction ID" value="UER00133"/>
</dbReference>
<dbReference type="UniPathway" id="UPA00074">
    <property type="reaction ID" value="UER00135"/>
</dbReference>
<dbReference type="Proteomes" id="UP000001939">
    <property type="component" value="Chromosome"/>
</dbReference>
<dbReference type="GO" id="GO:0005829">
    <property type="term" value="C:cytosol"/>
    <property type="evidence" value="ECO:0007669"/>
    <property type="project" value="TreeGrafter"/>
</dbReference>
<dbReference type="GO" id="GO:0003937">
    <property type="term" value="F:IMP cyclohydrolase activity"/>
    <property type="evidence" value="ECO:0007669"/>
    <property type="project" value="UniProtKB-UniRule"/>
</dbReference>
<dbReference type="GO" id="GO:0004643">
    <property type="term" value="F:phosphoribosylaminoimidazolecarboxamide formyltransferase activity"/>
    <property type="evidence" value="ECO:0007669"/>
    <property type="project" value="UniProtKB-UniRule"/>
</dbReference>
<dbReference type="GO" id="GO:0006189">
    <property type="term" value="P:'de novo' IMP biosynthetic process"/>
    <property type="evidence" value="ECO:0007669"/>
    <property type="project" value="UniProtKB-UniRule"/>
</dbReference>
<dbReference type="CDD" id="cd01421">
    <property type="entry name" value="IMPCH"/>
    <property type="match status" value="1"/>
</dbReference>
<dbReference type="FunFam" id="3.40.140.20:FF:000001">
    <property type="entry name" value="Bifunctional purine biosynthesis protein PurH"/>
    <property type="match status" value="1"/>
</dbReference>
<dbReference type="FunFam" id="3.40.140.20:FF:000002">
    <property type="entry name" value="Bifunctional purine biosynthesis protein PurH"/>
    <property type="match status" value="1"/>
</dbReference>
<dbReference type="FunFam" id="3.40.50.1380:FF:000001">
    <property type="entry name" value="Bifunctional purine biosynthesis protein PurH"/>
    <property type="match status" value="1"/>
</dbReference>
<dbReference type="Gene3D" id="3.40.140.20">
    <property type="match status" value="2"/>
</dbReference>
<dbReference type="Gene3D" id="3.40.50.1380">
    <property type="entry name" value="Methylglyoxal synthase-like domain"/>
    <property type="match status" value="1"/>
</dbReference>
<dbReference type="HAMAP" id="MF_00139">
    <property type="entry name" value="PurH"/>
    <property type="match status" value="1"/>
</dbReference>
<dbReference type="InterPro" id="IPR024051">
    <property type="entry name" value="AICAR_Tfase_dup_dom_sf"/>
</dbReference>
<dbReference type="InterPro" id="IPR016193">
    <property type="entry name" value="Cytidine_deaminase-like"/>
</dbReference>
<dbReference type="InterPro" id="IPR011607">
    <property type="entry name" value="MGS-like_dom"/>
</dbReference>
<dbReference type="InterPro" id="IPR036914">
    <property type="entry name" value="MGS-like_dom_sf"/>
</dbReference>
<dbReference type="InterPro" id="IPR002695">
    <property type="entry name" value="PurH-like"/>
</dbReference>
<dbReference type="NCBIfam" id="NF002049">
    <property type="entry name" value="PRK00881.1"/>
    <property type="match status" value="1"/>
</dbReference>
<dbReference type="NCBIfam" id="TIGR00355">
    <property type="entry name" value="purH"/>
    <property type="match status" value="1"/>
</dbReference>
<dbReference type="PANTHER" id="PTHR11692:SF0">
    <property type="entry name" value="BIFUNCTIONAL PURINE BIOSYNTHESIS PROTEIN ATIC"/>
    <property type="match status" value="1"/>
</dbReference>
<dbReference type="PANTHER" id="PTHR11692">
    <property type="entry name" value="BIFUNCTIONAL PURINE BIOSYNTHESIS PROTEIN PURH"/>
    <property type="match status" value="1"/>
</dbReference>
<dbReference type="Pfam" id="PF01808">
    <property type="entry name" value="AICARFT_IMPCHas"/>
    <property type="match status" value="1"/>
</dbReference>
<dbReference type="Pfam" id="PF02142">
    <property type="entry name" value="MGS"/>
    <property type="match status" value="1"/>
</dbReference>
<dbReference type="PIRSF" id="PIRSF000414">
    <property type="entry name" value="AICARFT_IMPCHas"/>
    <property type="match status" value="1"/>
</dbReference>
<dbReference type="SMART" id="SM00798">
    <property type="entry name" value="AICARFT_IMPCHas"/>
    <property type="match status" value="1"/>
</dbReference>
<dbReference type="SMART" id="SM00851">
    <property type="entry name" value="MGS"/>
    <property type="match status" value="1"/>
</dbReference>
<dbReference type="SUPFAM" id="SSF53927">
    <property type="entry name" value="Cytidine deaminase-like"/>
    <property type="match status" value="1"/>
</dbReference>
<dbReference type="SUPFAM" id="SSF52335">
    <property type="entry name" value="Methylglyoxal synthase-like"/>
    <property type="match status" value="1"/>
</dbReference>
<dbReference type="PROSITE" id="PS51855">
    <property type="entry name" value="MGS"/>
    <property type="match status" value="1"/>
</dbReference>
<reference key="1">
    <citation type="journal article" date="2006" name="Lancet">
        <title>Complete genome sequence of USA300, an epidemic clone of community-acquired meticillin-resistant Staphylococcus aureus.</title>
        <authorList>
            <person name="Diep B.A."/>
            <person name="Gill S.R."/>
            <person name="Chang R.F."/>
            <person name="Phan T.H."/>
            <person name="Chen J.H."/>
            <person name="Davidson M.G."/>
            <person name="Lin F."/>
            <person name="Lin J."/>
            <person name="Carleton H.A."/>
            <person name="Mongodin E.F."/>
            <person name="Sensabaugh G.F."/>
            <person name="Perdreau-Remington F."/>
        </authorList>
    </citation>
    <scope>NUCLEOTIDE SEQUENCE [LARGE SCALE GENOMIC DNA]</scope>
    <source>
        <strain>USA300</strain>
    </source>
</reference>
<keyword id="KW-0378">Hydrolase</keyword>
<keyword id="KW-0511">Multifunctional enzyme</keyword>
<keyword id="KW-0658">Purine biosynthesis</keyword>
<keyword id="KW-0808">Transferase</keyword>
<proteinExistence type="inferred from homology"/>
<evidence type="ECO:0000255" key="1">
    <source>
        <dbReference type="HAMAP-Rule" id="MF_00139"/>
    </source>
</evidence>
<evidence type="ECO:0000255" key="2">
    <source>
        <dbReference type="PROSITE-ProRule" id="PRU01202"/>
    </source>
</evidence>
<organism>
    <name type="scientific">Staphylococcus aureus (strain USA300)</name>
    <dbReference type="NCBI Taxonomy" id="367830"/>
    <lineage>
        <taxon>Bacteria</taxon>
        <taxon>Bacillati</taxon>
        <taxon>Bacillota</taxon>
        <taxon>Bacilli</taxon>
        <taxon>Bacillales</taxon>
        <taxon>Staphylococcaceae</taxon>
        <taxon>Staphylococcus</taxon>
    </lineage>
</organism>
<name>PUR9_STAA3</name>
<sequence length="492" mass="54378">MKKAILSVSNKTGIVEFAKALTQLNYELYSTGGTKRILDEANVPVRSVSDLTHFPEIMDGRVKTLHPAVHGGILADRNKPQHLNELSEQHIDLIDMVVVNLYPFQQTVANPDVTMDEAIENIDIGGPTMLRAAAKNYKHVTTIVHPADYQEVLTRLRNDSLDESYRQSLMIKVFEHTAEYDEAIVRFFKGDKETLRYGENPQQSAYFVRTSNAKHTIAGAKQLHGKQLSYNNIKDADATLALVKKFDTPATVAVKHMNPCGVGIGDTIEQAFQHAYEADSQSIFGGIVALNRAVTPELAEQLHSIFLEVIIAPKFTDEALDILKQKKNVRLLEIDMTIDSNEEEFVSVSGGYLVQDKDNYVVPKEEMKVVTEVAPTDEQWEAMLLGWKVVPSVKSNAIILSNNKQTVGIGAGQMNRVGAAKIALERAIEINDHVALVSDGFFPMGDTVELAAQHGIKAIIQPSGSIKDQDSIDMANKHGIAMVVTGTRHFKH</sequence>